<feature type="chain" id="PRO_0000384197" description="Mitochondrial distribution and morphology protein 10">
    <location>
        <begin position="1"/>
        <end position="493"/>
    </location>
</feature>
<accession>B5VDL3</accession>
<keyword id="KW-0472">Membrane</keyword>
<keyword id="KW-0496">Mitochondrion</keyword>
<keyword id="KW-1000">Mitochondrion outer membrane</keyword>
<keyword id="KW-0812">Transmembrane</keyword>
<keyword id="KW-1134">Transmembrane beta strand</keyword>
<gene>
    <name evidence="1" type="primary">MDM10</name>
    <name type="ORF">AWRI1631_10540</name>
</gene>
<evidence type="ECO:0000255" key="1">
    <source>
        <dbReference type="HAMAP-Rule" id="MF_03102"/>
    </source>
</evidence>
<comment type="function">
    <text evidence="1">Component of the ERMES/MDM complex, which serves as a molecular tether to connect the endoplasmic reticulum and mitochondria. Components of this complex are involved in the control of mitochondrial shape and protein biogenesis and may function in phospholipid exchange. MDM10 is involved in the late assembly steps of the general translocase of the mitochondrial outer membrane (TOM complex). Functions in the TOM40-specific route of the assembly of outer membrane beta-barrel proteins, including the association of TOM40 with the receptor TOM22 and small TOM proteins. Can associate with the SAM(core) complex as well as the MDM12-MMM1 complex, both involved in late steps of the major beta-barrel assembly pathway, that is responsible for biogenesis of all outer membrane beta-barrel proteins. May act as a switch that shuttles between both complexes and channels precursor proteins into the TOM40-specific pathway. Plays a role in mitochondrial morphology and in the inheritance of mitochondria.</text>
</comment>
<comment type="subunit">
    <text evidence="1">Component of the ER-mitochondria encounter structure (ERMES) or MDM complex, composed of MMM1, MDM10, MDM12 and MDM34. Associates with the mitochondrial outer membrane sorting assembly machinery SAM(core) complex, which consists of SAM35, SAM37 and SAM50, to form a SAM(holo) complex.</text>
</comment>
<comment type="subcellular location">
    <subcellularLocation>
        <location evidence="1">Mitochondrion outer membrane</location>
        <topology evidence="1">Multi-pass membrane protein</topology>
    </subcellularLocation>
    <text evidence="1">The ERMES/MDM complex localizes to a few discrete foci (around 10 per single cell), that represent mitochondria-endoplasmic reticulum junctions. These foci are often found next to mtDNA nucleoids.</text>
</comment>
<comment type="domain">
    <text>Lacks alpha-helical transmembrane segments, suggesting that it resides in the membrane via beta-sheet conformations similar to those predicted for other outer membrane proteins and porin.</text>
</comment>
<comment type="similarity">
    <text evidence="1">Belongs to the MDM10 family.</text>
</comment>
<dbReference type="EMBL" id="ABSV01000024">
    <property type="protein sequence ID" value="EDZ73981.1"/>
    <property type="molecule type" value="Genomic_DNA"/>
</dbReference>
<dbReference type="SMR" id="B5VDL3"/>
<dbReference type="Proteomes" id="UP000008988">
    <property type="component" value="Unassembled WGS sequence"/>
</dbReference>
<dbReference type="GO" id="GO:0032865">
    <property type="term" value="C:ERMES complex"/>
    <property type="evidence" value="ECO:0007669"/>
    <property type="project" value="UniProtKB-UniRule"/>
</dbReference>
<dbReference type="GO" id="GO:0005758">
    <property type="term" value="C:mitochondrial intermembrane space"/>
    <property type="evidence" value="ECO:0000304"/>
    <property type="project" value="Reactome"/>
</dbReference>
<dbReference type="GO" id="GO:0005741">
    <property type="term" value="C:mitochondrial outer membrane"/>
    <property type="evidence" value="ECO:0000304"/>
    <property type="project" value="Reactome"/>
</dbReference>
<dbReference type="GO" id="GO:0001401">
    <property type="term" value="C:SAM complex"/>
    <property type="evidence" value="ECO:0007669"/>
    <property type="project" value="TreeGrafter"/>
</dbReference>
<dbReference type="GO" id="GO:0051654">
    <property type="term" value="P:establishment of mitochondrion localization"/>
    <property type="evidence" value="ECO:0007669"/>
    <property type="project" value="TreeGrafter"/>
</dbReference>
<dbReference type="GO" id="GO:0000002">
    <property type="term" value="P:mitochondrial genome maintenance"/>
    <property type="evidence" value="ECO:0007669"/>
    <property type="project" value="UniProtKB-UniRule"/>
</dbReference>
<dbReference type="GO" id="GO:0070096">
    <property type="term" value="P:mitochondrial outer membrane translocase complex assembly"/>
    <property type="evidence" value="ECO:0007669"/>
    <property type="project" value="UniProtKB-UniRule"/>
</dbReference>
<dbReference type="GO" id="GO:1990456">
    <property type="term" value="P:mitochondrion-endoplasmic reticulum membrane tethering"/>
    <property type="evidence" value="ECO:0007669"/>
    <property type="project" value="UniProtKB-UniRule"/>
</dbReference>
<dbReference type="GO" id="GO:0015914">
    <property type="term" value="P:phospholipid transport"/>
    <property type="evidence" value="ECO:0007669"/>
    <property type="project" value="TreeGrafter"/>
</dbReference>
<dbReference type="GO" id="GO:0045040">
    <property type="term" value="P:protein insertion into mitochondrial outer membrane"/>
    <property type="evidence" value="ECO:0007669"/>
    <property type="project" value="UniProtKB-UniRule"/>
</dbReference>
<dbReference type="HAMAP" id="MF_03102">
    <property type="entry name" value="Mdm10"/>
    <property type="match status" value="1"/>
</dbReference>
<dbReference type="InterPro" id="IPR027539">
    <property type="entry name" value="Mdm10"/>
</dbReference>
<dbReference type="PANTHER" id="PTHR28035">
    <property type="entry name" value="MITOCHONDRIAL DISTRIBUTION AND MORPHOLOGY PROTEIN 10"/>
    <property type="match status" value="1"/>
</dbReference>
<dbReference type="PANTHER" id="PTHR28035:SF1">
    <property type="entry name" value="MITOCHONDRIAL DISTRIBUTION AND MORPHOLOGY PROTEIN 10"/>
    <property type="match status" value="1"/>
</dbReference>
<dbReference type="Pfam" id="PF12519">
    <property type="entry name" value="MDM10"/>
    <property type="match status" value="1"/>
</dbReference>
<proteinExistence type="inferred from homology"/>
<organism>
    <name type="scientific">Saccharomyces cerevisiae (strain AWRI1631)</name>
    <name type="common">Baker's yeast</name>
    <dbReference type="NCBI Taxonomy" id="545124"/>
    <lineage>
        <taxon>Eukaryota</taxon>
        <taxon>Fungi</taxon>
        <taxon>Dikarya</taxon>
        <taxon>Ascomycota</taxon>
        <taxon>Saccharomycotina</taxon>
        <taxon>Saccharomycetes</taxon>
        <taxon>Saccharomycetales</taxon>
        <taxon>Saccharomycetaceae</taxon>
        <taxon>Saccharomyces</taxon>
    </lineage>
</organism>
<protein>
    <recommendedName>
        <fullName evidence="1">Mitochondrial distribution and morphology protein 10</fullName>
    </recommendedName>
    <alternativeName>
        <fullName evidence="1">Mitochondrial inheritance component MDM10</fullName>
    </alternativeName>
</protein>
<sequence>MLPYMDQVLRAFYQSTHWSTQNSYEDITATSRTLLDFRIPSAIHLQISNKSTPNTFNSLDFSTRSRINGSLSYLYSDAQQLENFMRNSTDIPLQDATETYRQLQPNLNFSVSSGNTLSSDNTTVDNDKKLLHDSKFVKKSLYYGRMYYPSSDLEAMIIKRLNPQTQFMLKGVSSFKESLNVLTCYFQRDSHRNLQEWIFSTSDLLCGYRVLHNFLTTPSKFNTSLYNNSSLSLGAEFWLGLVSLSPGCSTTLRYYTHSTNTGRPLTLTLSWNPLFGHISSTYSAKTGTNSTFCAKYDFNLYSIESNLSFGCEFWQKKHHLLETNKNNNDKLEPISDELVDINSNSRATKLLHENVPDLNLAVNDIPSTLDIPVHKQKLLNDLTYAFSSSLRKIDEERSTIEKFDNKINSSIFTSVWKLSTSLRDKTLKLLWEGKWRGFLISAGTELVFTRGFQESLSDDEKNDNAISISATDTENGNIPVFPTKFGIQFQYST</sequence>
<reference key="1">
    <citation type="journal article" date="2008" name="FEMS Yeast Res.">
        <title>Comparative genome analysis of a Saccharomyces cerevisiae wine strain.</title>
        <authorList>
            <person name="Borneman A.R."/>
            <person name="Forgan A.H."/>
            <person name="Pretorius I.S."/>
            <person name="Chambers P.J."/>
        </authorList>
    </citation>
    <scope>NUCLEOTIDE SEQUENCE [LARGE SCALE GENOMIC DNA]</scope>
    <source>
        <strain>AWRI1631</strain>
    </source>
</reference>
<name>MDM10_YEAS6</name>